<keyword id="KW-0131">Cell cycle</keyword>
<keyword id="KW-0132">Cell division</keyword>
<keyword id="KW-0159">Chromosome partition</keyword>
<keyword id="KW-0963">Cytoplasm</keyword>
<keyword id="KW-1185">Reference proteome</keyword>
<evidence type="ECO:0000255" key="1">
    <source>
        <dbReference type="HAMAP-Rule" id="MF_01804"/>
    </source>
</evidence>
<accession>Q49XU2</accession>
<feature type="chain" id="PRO_0000211154" description="Segregation and condensation protein B">
    <location>
        <begin position="1"/>
        <end position="182"/>
    </location>
</feature>
<sequence length="182" mass="20408">MALQDKGILEALLYTAGDEGLDQQQLLEILEIEPTTLTELIEAYDSPGLTIQHYGNTYVLTTKKEASDYIEQLIEQKSKMKLSQAAMESLSIIAYNQPLSRSDIELIRGINSDGAVKTLIARGLVEAKEEADSRSHQLYTTELFLNVFGIEHLDDLPTTDEEDEEIEAFFSNLVNQKGDNHE</sequence>
<organism>
    <name type="scientific">Staphylococcus saprophyticus subsp. saprophyticus (strain ATCC 15305 / DSM 20229 / NCIMB 8711 / NCTC 7292 / S-41)</name>
    <dbReference type="NCBI Taxonomy" id="342451"/>
    <lineage>
        <taxon>Bacteria</taxon>
        <taxon>Bacillati</taxon>
        <taxon>Bacillota</taxon>
        <taxon>Bacilli</taxon>
        <taxon>Bacillales</taxon>
        <taxon>Staphylococcaceae</taxon>
        <taxon>Staphylococcus</taxon>
    </lineage>
</organism>
<gene>
    <name evidence="1" type="primary">scpB</name>
    <name type="ordered locus">SSP1258</name>
</gene>
<name>SCPB_STAS1</name>
<dbReference type="EMBL" id="AP008934">
    <property type="protein sequence ID" value="BAE18403.1"/>
    <property type="molecule type" value="Genomic_DNA"/>
</dbReference>
<dbReference type="RefSeq" id="WP_002483233.1">
    <property type="nucleotide sequence ID" value="NZ_MTGA01000038.1"/>
</dbReference>
<dbReference type="SMR" id="Q49XU2"/>
<dbReference type="GeneID" id="66867488"/>
<dbReference type="KEGG" id="ssp:SSP1258"/>
<dbReference type="eggNOG" id="COG1386">
    <property type="taxonomic scope" value="Bacteria"/>
</dbReference>
<dbReference type="HOGENOM" id="CLU_045647_5_3_9"/>
<dbReference type="OrthoDB" id="9806226at2"/>
<dbReference type="Proteomes" id="UP000006371">
    <property type="component" value="Chromosome"/>
</dbReference>
<dbReference type="GO" id="GO:0005737">
    <property type="term" value="C:cytoplasm"/>
    <property type="evidence" value="ECO:0007669"/>
    <property type="project" value="UniProtKB-SubCell"/>
</dbReference>
<dbReference type="GO" id="GO:0051301">
    <property type="term" value="P:cell division"/>
    <property type="evidence" value="ECO:0007669"/>
    <property type="project" value="UniProtKB-KW"/>
</dbReference>
<dbReference type="GO" id="GO:0051304">
    <property type="term" value="P:chromosome separation"/>
    <property type="evidence" value="ECO:0007669"/>
    <property type="project" value="InterPro"/>
</dbReference>
<dbReference type="GO" id="GO:0006260">
    <property type="term" value="P:DNA replication"/>
    <property type="evidence" value="ECO:0007669"/>
    <property type="project" value="UniProtKB-UniRule"/>
</dbReference>
<dbReference type="Gene3D" id="1.10.10.10">
    <property type="entry name" value="Winged helix-like DNA-binding domain superfamily/Winged helix DNA-binding domain"/>
    <property type="match status" value="2"/>
</dbReference>
<dbReference type="HAMAP" id="MF_01804">
    <property type="entry name" value="ScpB"/>
    <property type="match status" value="1"/>
</dbReference>
<dbReference type="InterPro" id="IPR005234">
    <property type="entry name" value="ScpB_csome_segregation"/>
</dbReference>
<dbReference type="InterPro" id="IPR036388">
    <property type="entry name" value="WH-like_DNA-bd_sf"/>
</dbReference>
<dbReference type="InterPro" id="IPR036390">
    <property type="entry name" value="WH_DNA-bd_sf"/>
</dbReference>
<dbReference type="NCBIfam" id="TIGR00281">
    <property type="entry name" value="SMC-Scp complex subunit ScpB"/>
    <property type="match status" value="1"/>
</dbReference>
<dbReference type="PANTHER" id="PTHR34298">
    <property type="entry name" value="SEGREGATION AND CONDENSATION PROTEIN B"/>
    <property type="match status" value="1"/>
</dbReference>
<dbReference type="PANTHER" id="PTHR34298:SF2">
    <property type="entry name" value="SEGREGATION AND CONDENSATION PROTEIN B"/>
    <property type="match status" value="1"/>
</dbReference>
<dbReference type="Pfam" id="PF04079">
    <property type="entry name" value="SMC_ScpB"/>
    <property type="match status" value="1"/>
</dbReference>
<dbReference type="PIRSF" id="PIRSF019345">
    <property type="entry name" value="ScpB"/>
    <property type="match status" value="1"/>
</dbReference>
<dbReference type="SUPFAM" id="SSF46785">
    <property type="entry name" value="Winged helix' DNA-binding domain"/>
    <property type="match status" value="2"/>
</dbReference>
<proteinExistence type="inferred from homology"/>
<protein>
    <recommendedName>
        <fullName evidence="1">Segregation and condensation protein B</fullName>
    </recommendedName>
</protein>
<reference key="1">
    <citation type="journal article" date="2005" name="Proc. Natl. Acad. Sci. U.S.A.">
        <title>Whole genome sequence of Staphylococcus saprophyticus reveals the pathogenesis of uncomplicated urinary tract infection.</title>
        <authorList>
            <person name="Kuroda M."/>
            <person name="Yamashita A."/>
            <person name="Hirakawa H."/>
            <person name="Kumano M."/>
            <person name="Morikawa K."/>
            <person name="Higashide M."/>
            <person name="Maruyama A."/>
            <person name="Inose Y."/>
            <person name="Matoba K."/>
            <person name="Toh H."/>
            <person name="Kuhara S."/>
            <person name="Hattori M."/>
            <person name="Ohta T."/>
        </authorList>
    </citation>
    <scope>NUCLEOTIDE SEQUENCE [LARGE SCALE GENOMIC DNA]</scope>
    <source>
        <strain>ATCC 15305 / DSM 20229 / NCIMB 8711 / NCTC 7292 / S-41</strain>
    </source>
</reference>
<comment type="function">
    <text evidence="1">Participates in chromosomal partition during cell division. May act via the formation of a condensin-like complex containing Smc and ScpA that pull DNA away from mid-cell into both cell halves.</text>
</comment>
<comment type="subunit">
    <text evidence="1">Homodimer. Homodimerization may be required to stabilize the binding of ScpA to the Smc head domains. Component of a cohesin-like complex composed of ScpA, ScpB and the Smc homodimer, in which ScpA and ScpB bind to the head domain of Smc. The presence of the three proteins is required for the association of the complex with DNA.</text>
</comment>
<comment type="subcellular location">
    <subcellularLocation>
        <location evidence="1">Cytoplasm</location>
    </subcellularLocation>
    <text evidence="1">Associated with two foci at the outer edges of the nucleoid region in young cells, and at four foci within both cell halves in older cells.</text>
</comment>
<comment type="similarity">
    <text evidence="1">Belongs to the ScpB family.</text>
</comment>